<accession>P57273</accession>
<comment type="function">
    <text evidence="1">Involved in acetate metabolism.</text>
</comment>
<comment type="catalytic activity">
    <reaction>
        <text>acetyl-CoA + phosphate = acetyl phosphate + CoA</text>
        <dbReference type="Rhea" id="RHEA:19521"/>
        <dbReference type="ChEBI" id="CHEBI:22191"/>
        <dbReference type="ChEBI" id="CHEBI:43474"/>
        <dbReference type="ChEBI" id="CHEBI:57287"/>
        <dbReference type="ChEBI" id="CHEBI:57288"/>
        <dbReference type="EC" id="2.3.1.8"/>
    </reaction>
</comment>
<comment type="pathway">
    <text>Metabolic intermediate biosynthesis; acetyl-CoA biosynthesis; acetyl-CoA from acetate: step 2/2.</text>
</comment>
<comment type="subunit">
    <text evidence="1">Homohexamer.</text>
</comment>
<comment type="subcellular location">
    <subcellularLocation>
        <location evidence="2">Cytoplasm</location>
    </subcellularLocation>
</comment>
<comment type="domain">
    <text evidence="1">The N-terminal region seems to be important for proper quaternary structure. The C-terminal region contains the substrate-binding site (By similarity).</text>
</comment>
<comment type="similarity">
    <text evidence="2">In the N-terminal section; belongs to the CobB/CobQ family.</text>
</comment>
<comment type="similarity">
    <text evidence="2">In the C-terminal section; belongs to the phosphate acetyltransferase and butyryltransferase family.</text>
</comment>
<proteinExistence type="inferred from homology"/>
<reference key="1">
    <citation type="journal article" date="2000" name="Nature">
        <title>Genome sequence of the endocellular bacterial symbiont of aphids Buchnera sp. APS.</title>
        <authorList>
            <person name="Shigenobu S."/>
            <person name="Watanabe H."/>
            <person name="Hattori M."/>
            <person name="Sakaki Y."/>
            <person name="Ishikawa H."/>
        </authorList>
    </citation>
    <scope>NUCLEOTIDE SEQUENCE [LARGE SCALE GENOMIC DNA]</scope>
    <source>
        <strain>APS</strain>
    </source>
</reference>
<keyword id="KW-0012">Acyltransferase</keyword>
<keyword id="KW-0963">Cytoplasm</keyword>
<keyword id="KW-1185">Reference proteome</keyword>
<keyword id="KW-0808">Transferase</keyword>
<gene>
    <name type="primary">pta</name>
    <name type="ordered locus">BU176</name>
</gene>
<name>PTA_BUCAI</name>
<evidence type="ECO:0000250" key="1"/>
<evidence type="ECO:0000305" key="2"/>
<sequence>MSRIIMLIPLDKDIGLTSIGLSIIYFFYQKKIKKKSVQSILYFSCTQNSSNSTSHVINKYFSKIVHTVDYIDFSKVLFNSPEYSFLLNKVIDEHYNNKFLRELILIEGIKNNYCINSEEMNYDISQNLNAEVIFIANLENSSPEYIKNKEKKINFFLKQKKYKNILGVIFNQINSPFLENKYDFIKKLIVLKKIKNETKTIVPKKILKNNFFSIIACIPWNRNIVTTRVIDLFNFLNIQHTNLVQKKNHIIEEIIIFDTHHLNLLNKHSLNTLVIVSFSRVDVFLNVLNCNVNRSKVKCIILTGILKLKKNIASLYKFLIKRSISIFFTEKNTIEILSQLQNFNFDISVKDITYIKKLQRYISNFFCHSSFMFFKKKYNINVIYPPKEFCYNLKLLSQKKNKRIKLPESYEIRILKSVAICSDSNIAQCVLLGDPKKIYSIANDNGINLKKNIEIIDPISVRQEYLARFLEIRKGKNINEFSAKKQLEDNTVLATLILESNHVDGLVSGSINTTSDTIRPALQIIKTNPQSLLVSSIFFMLLPNQVLIYGDCAININPTAEELAVIAIQSADSAKMFGIEPRIAMLSYSTGCSGFGCQVEKVKEATSIIKNRRSDLIIDGPIQYDAAVSNKVAKLKAPSSPISGSANVFIFPDLNSGNIAYKAVQRSSRIVSIGPMLQGLRKPVNDLSRGASVEDIIYTIALTSIQSE</sequence>
<protein>
    <recommendedName>
        <fullName>Phosphate acetyltransferase</fullName>
        <ecNumber>2.3.1.8</ecNumber>
    </recommendedName>
    <alternativeName>
        <fullName>Phosphotransacetylase</fullName>
    </alternativeName>
</protein>
<organism>
    <name type="scientific">Buchnera aphidicola subsp. Acyrthosiphon pisum (strain APS)</name>
    <name type="common">Acyrthosiphon pisum symbiotic bacterium</name>
    <dbReference type="NCBI Taxonomy" id="107806"/>
    <lineage>
        <taxon>Bacteria</taxon>
        <taxon>Pseudomonadati</taxon>
        <taxon>Pseudomonadota</taxon>
        <taxon>Gammaproteobacteria</taxon>
        <taxon>Enterobacterales</taxon>
        <taxon>Erwiniaceae</taxon>
        <taxon>Buchnera</taxon>
    </lineage>
</organism>
<feature type="chain" id="PRO_0000179122" description="Phosphate acetyltransferase">
    <location>
        <begin position="1"/>
        <end position="708"/>
    </location>
</feature>
<feature type="region of interest" description="Phosphate acetyltransferase">
    <location>
        <begin position="388"/>
        <end position="708"/>
    </location>
</feature>
<dbReference type="EC" id="2.3.1.8"/>
<dbReference type="EMBL" id="BA000003">
    <property type="protein sequence ID" value="BAB12893.1"/>
    <property type="molecule type" value="Genomic_DNA"/>
</dbReference>
<dbReference type="RefSeq" id="NP_240007.1">
    <property type="nucleotide sequence ID" value="NC_002528.1"/>
</dbReference>
<dbReference type="RefSeq" id="WP_010895985.1">
    <property type="nucleotide sequence ID" value="NC_002528.1"/>
</dbReference>
<dbReference type="SMR" id="P57273"/>
<dbReference type="STRING" id="563178.BUAP5A_173"/>
<dbReference type="EnsemblBacteria" id="BAB12893">
    <property type="protein sequence ID" value="BAB12893"/>
    <property type="gene ID" value="BAB12893"/>
</dbReference>
<dbReference type="KEGG" id="buc:BU176"/>
<dbReference type="PATRIC" id="fig|107806.10.peg.187"/>
<dbReference type="eggNOG" id="COG0280">
    <property type="taxonomic scope" value="Bacteria"/>
</dbReference>
<dbReference type="eggNOG" id="COG0857">
    <property type="taxonomic scope" value="Bacteria"/>
</dbReference>
<dbReference type="HOGENOM" id="CLU_019723_2_1_6"/>
<dbReference type="UniPathway" id="UPA00340">
    <property type="reaction ID" value="UER00459"/>
</dbReference>
<dbReference type="Proteomes" id="UP000001806">
    <property type="component" value="Chromosome"/>
</dbReference>
<dbReference type="GO" id="GO:0005737">
    <property type="term" value="C:cytoplasm"/>
    <property type="evidence" value="ECO:0007669"/>
    <property type="project" value="UniProtKB-SubCell"/>
</dbReference>
<dbReference type="GO" id="GO:0008959">
    <property type="term" value="F:phosphate acetyltransferase activity"/>
    <property type="evidence" value="ECO:0007669"/>
    <property type="project" value="UniProtKB-EC"/>
</dbReference>
<dbReference type="GO" id="GO:0006085">
    <property type="term" value="P:acetyl-CoA biosynthetic process"/>
    <property type="evidence" value="ECO:0007669"/>
    <property type="project" value="UniProtKB-UniPathway"/>
</dbReference>
<dbReference type="FunFam" id="3.40.50.10750:FF:000001">
    <property type="entry name" value="Phosphate acetyltransferase"/>
    <property type="match status" value="1"/>
</dbReference>
<dbReference type="Gene3D" id="3.40.50.10950">
    <property type="match status" value="1"/>
</dbReference>
<dbReference type="Gene3D" id="3.40.1390.20">
    <property type="entry name" value="HprK N-terminal domain-like"/>
    <property type="match status" value="1"/>
</dbReference>
<dbReference type="Gene3D" id="3.40.50.10750">
    <property type="entry name" value="Isocitrate/Isopropylmalate dehydrogenase-like"/>
    <property type="match status" value="1"/>
</dbReference>
<dbReference type="InterPro" id="IPR010766">
    <property type="entry name" value="DRTGG"/>
</dbReference>
<dbReference type="InterPro" id="IPR016475">
    <property type="entry name" value="P-Actrans_bac"/>
</dbReference>
<dbReference type="InterPro" id="IPR004614">
    <property type="entry name" value="P_AcTrfase"/>
</dbReference>
<dbReference type="InterPro" id="IPR042113">
    <property type="entry name" value="P_AcTrfase_dom1"/>
</dbReference>
<dbReference type="InterPro" id="IPR042112">
    <property type="entry name" value="P_AcTrfase_dom2"/>
</dbReference>
<dbReference type="InterPro" id="IPR050500">
    <property type="entry name" value="Phos_Acetyltrans/Butyryltrans"/>
</dbReference>
<dbReference type="InterPro" id="IPR002505">
    <property type="entry name" value="PTA_PTB"/>
</dbReference>
<dbReference type="InterPro" id="IPR028979">
    <property type="entry name" value="Ser_kin/Pase_Hpr-like_N_sf"/>
</dbReference>
<dbReference type="NCBIfam" id="NF004167">
    <property type="entry name" value="PRK05632.1"/>
    <property type="match status" value="1"/>
</dbReference>
<dbReference type="NCBIfam" id="NF007233">
    <property type="entry name" value="PRK09653.1"/>
    <property type="match status" value="1"/>
</dbReference>
<dbReference type="NCBIfam" id="TIGR00651">
    <property type="entry name" value="pta"/>
    <property type="match status" value="1"/>
</dbReference>
<dbReference type="PANTHER" id="PTHR43356">
    <property type="entry name" value="PHOSPHATE ACETYLTRANSFERASE"/>
    <property type="match status" value="1"/>
</dbReference>
<dbReference type="PANTHER" id="PTHR43356:SF3">
    <property type="entry name" value="PHOSPHATE ACETYLTRANSFERASE"/>
    <property type="match status" value="1"/>
</dbReference>
<dbReference type="Pfam" id="PF13500">
    <property type="entry name" value="AAA_26"/>
    <property type="match status" value="1"/>
</dbReference>
<dbReference type="Pfam" id="PF07085">
    <property type="entry name" value="DRTGG"/>
    <property type="match status" value="1"/>
</dbReference>
<dbReference type="Pfam" id="PF01515">
    <property type="entry name" value="PTA_PTB"/>
    <property type="match status" value="1"/>
</dbReference>
<dbReference type="PIRSF" id="PIRSF006107">
    <property type="entry name" value="PhpActrans_proteobac"/>
    <property type="match status" value="1"/>
</dbReference>
<dbReference type="SUPFAM" id="SSF75138">
    <property type="entry name" value="HprK N-terminal domain-like"/>
    <property type="match status" value="1"/>
</dbReference>
<dbReference type="SUPFAM" id="SSF53659">
    <property type="entry name" value="Isocitrate/Isopropylmalate dehydrogenase-like"/>
    <property type="match status" value="1"/>
</dbReference>